<reference key="1">
    <citation type="journal article" date="2001" name="Proc. Natl. Acad. Sci. U.S.A.">
        <title>The complete genome of the crenarchaeon Sulfolobus solfataricus P2.</title>
        <authorList>
            <person name="She Q."/>
            <person name="Singh R.K."/>
            <person name="Confalonieri F."/>
            <person name="Zivanovic Y."/>
            <person name="Allard G."/>
            <person name="Awayez M.J."/>
            <person name="Chan-Weiher C.C.-Y."/>
            <person name="Clausen I.G."/>
            <person name="Curtis B.A."/>
            <person name="De Moors A."/>
            <person name="Erauso G."/>
            <person name="Fletcher C."/>
            <person name="Gordon P.M.K."/>
            <person name="Heikamp-de Jong I."/>
            <person name="Jeffries A.C."/>
            <person name="Kozera C.J."/>
            <person name="Medina N."/>
            <person name="Peng X."/>
            <person name="Thi-Ngoc H.P."/>
            <person name="Redder P."/>
            <person name="Schenk M.E."/>
            <person name="Theriault C."/>
            <person name="Tolstrup N."/>
            <person name="Charlebois R.L."/>
            <person name="Doolittle W.F."/>
            <person name="Duguet M."/>
            <person name="Gaasterland T."/>
            <person name="Garrett R.A."/>
            <person name="Ragan M.A."/>
            <person name="Sensen C.W."/>
            <person name="Van der Oost J."/>
        </authorList>
    </citation>
    <scope>NUCLEOTIDE SEQUENCE [LARGE SCALE GENOMIC DNA]</scope>
    <source>
        <strain>ATCC 35092 / DSM 1617 / JCM 11322 / P2</strain>
    </source>
</reference>
<protein>
    <recommendedName>
        <fullName evidence="1">Probable glycine cleavage system H protein 3</fullName>
    </recommendedName>
</protein>
<sequence length="140" mass="16336">MKILGFTFPDDLLYEPEKHVWVRIEDNSVVSIGVTDLGQYMAGKIFQVTAKQKGEKVNGRSVLFSIESAKWIGKFRLPIEGEVFDVNEEVVKNPSIINERPYDSWIVKIRVEDMDIIKRTFKPIQEVYKQFEEEAKRVVR</sequence>
<name>GCSH3_SACS2</name>
<feature type="chain" id="PRO_0000166284" description="Probable glycine cleavage system H protein 3">
    <location>
        <begin position="1"/>
        <end position="140"/>
    </location>
</feature>
<feature type="domain" description="Lipoyl-binding" evidence="2">
    <location>
        <begin position="29"/>
        <end position="110"/>
    </location>
</feature>
<feature type="modified residue" description="N6-lipoyllysine" evidence="1">
    <location>
        <position position="70"/>
    </location>
</feature>
<gene>
    <name evidence="1" type="primary">gcvH3</name>
    <name type="ordered locus">SSO1105</name>
</gene>
<keyword id="KW-0450">Lipoyl</keyword>
<keyword id="KW-1185">Reference proteome</keyword>
<organism>
    <name type="scientific">Saccharolobus solfataricus (strain ATCC 35092 / DSM 1617 / JCM 11322 / P2)</name>
    <name type="common">Sulfolobus solfataricus</name>
    <dbReference type="NCBI Taxonomy" id="273057"/>
    <lineage>
        <taxon>Archaea</taxon>
        <taxon>Thermoproteota</taxon>
        <taxon>Thermoprotei</taxon>
        <taxon>Sulfolobales</taxon>
        <taxon>Sulfolobaceae</taxon>
        <taxon>Saccharolobus</taxon>
    </lineage>
</organism>
<evidence type="ECO:0000255" key="1">
    <source>
        <dbReference type="HAMAP-Rule" id="MF_00272"/>
    </source>
</evidence>
<evidence type="ECO:0000255" key="2">
    <source>
        <dbReference type="PROSITE-ProRule" id="PRU01066"/>
    </source>
</evidence>
<dbReference type="EMBL" id="AE006641">
    <property type="protein sequence ID" value="AAK41362.1"/>
    <property type="molecule type" value="Genomic_DNA"/>
</dbReference>
<dbReference type="PIR" id="C90263">
    <property type="entry name" value="C90263"/>
</dbReference>
<dbReference type="RefSeq" id="WP_009989738.1">
    <property type="nucleotide sequence ID" value="NC_002754.1"/>
</dbReference>
<dbReference type="SMR" id="Q97Z34"/>
<dbReference type="FunCoup" id="Q97Z34">
    <property type="interactions" value="134"/>
</dbReference>
<dbReference type="STRING" id="273057.SSO1105"/>
<dbReference type="PaxDb" id="273057-SSO1105"/>
<dbReference type="EnsemblBacteria" id="AAK41362">
    <property type="protein sequence ID" value="AAK41362"/>
    <property type="gene ID" value="SSO1105"/>
</dbReference>
<dbReference type="KEGG" id="sso:SSO1105"/>
<dbReference type="PATRIC" id="fig|273057.12.peg.1102"/>
<dbReference type="eggNOG" id="arCOG01303">
    <property type="taxonomic scope" value="Archaea"/>
</dbReference>
<dbReference type="HOGENOM" id="CLU_097408_2_2_2"/>
<dbReference type="InParanoid" id="Q97Z34"/>
<dbReference type="PhylomeDB" id="Q97Z34"/>
<dbReference type="Proteomes" id="UP000001974">
    <property type="component" value="Chromosome"/>
</dbReference>
<dbReference type="GO" id="GO:0005960">
    <property type="term" value="C:glycine cleavage complex"/>
    <property type="evidence" value="ECO:0007669"/>
    <property type="project" value="InterPro"/>
</dbReference>
<dbReference type="GO" id="GO:0019464">
    <property type="term" value="P:glycine decarboxylation via glycine cleavage system"/>
    <property type="evidence" value="ECO:0007669"/>
    <property type="project" value="UniProtKB-UniRule"/>
</dbReference>
<dbReference type="CDD" id="cd06848">
    <property type="entry name" value="GCS_H"/>
    <property type="match status" value="1"/>
</dbReference>
<dbReference type="Gene3D" id="2.40.50.100">
    <property type="match status" value="1"/>
</dbReference>
<dbReference type="HAMAP" id="MF_00272">
    <property type="entry name" value="GcvH"/>
    <property type="match status" value="1"/>
</dbReference>
<dbReference type="InterPro" id="IPR003016">
    <property type="entry name" value="2-oxoA_DH_lipoyl-BS"/>
</dbReference>
<dbReference type="InterPro" id="IPR000089">
    <property type="entry name" value="Biotin_lipoyl"/>
</dbReference>
<dbReference type="InterPro" id="IPR002930">
    <property type="entry name" value="GCV_H"/>
</dbReference>
<dbReference type="InterPro" id="IPR033753">
    <property type="entry name" value="GCV_H/Fam206"/>
</dbReference>
<dbReference type="InterPro" id="IPR011053">
    <property type="entry name" value="Single_hybrid_motif"/>
</dbReference>
<dbReference type="PANTHER" id="PTHR11715">
    <property type="entry name" value="GLYCINE CLEAVAGE SYSTEM H PROTEIN"/>
    <property type="match status" value="1"/>
</dbReference>
<dbReference type="PANTHER" id="PTHR11715:SF3">
    <property type="entry name" value="GLYCINE CLEAVAGE SYSTEM H PROTEIN-RELATED"/>
    <property type="match status" value="1"/>
</dbReference>
<dbReference type="Pfam" id="PF01597">
    <property type="entry name" value="GCV_H"/>
    <property type="match status" value="1"/>
</dbReference>
<dbReference type="SUPFAM" id="SSF51230">
    <property type="entry name" value="Single hybrid motif"/>
    <property type="match status" value="1"/>
</dbReference>
<dbReference type="PROSITE" id="PS50968">
    <property type="entry name" value="BIOTINYL_LIPOYL"/>
    <property type="match status" value="1"/>
</dbReference>
<dbReference type="PROSITE" id="PS00189">
    <property type="entry name" value="LIPOYL"/>
    <property type="match status" value="1"/>
</dbReference>
<accession>Q97Z34</accession>
<comment type="function">
    <text evidence="1">The glycine cleavage system catalyzes the degradation of glycine. The H protein shuttles the methylamine group of glycine from the P protein to the T protein.</text>
</comment>
<comment type="cofactor">
    <cofactor evidence="1">
        <name>(R)-lipoate</name>
        <dbReference type="ChEBI" id="CHEBI:83088"/>
    </cofactor>
    <text evidence="1">Binds 1 lipoyl cofactor covalently.</text>
</comment>
<comment type="subunit">
    <text evidence="1">The glycine cleavage system is composed of four proteins: P, T, L and H.</text>
</comment>
<comment type="similarity">
    <text evidence="1">Belongs to the GcvH family.</text>
</comment>
<proteinExistence type="inferred from homology"/>